<dbReference type="EC" id="6.1.1.3" evidence="1"/>
<dbReference type="EMBL" id="CP000891">
    <property type="protein sequence ID" value="ABX49498.1"/>
    <property type="molecule type" value="Genomic_DNA"/>
</dbReference>
<dbReference type="RefSeq" id="WP_012197181.1">
    <property type="nucleotide sequence ID" value="NC_009997.1"/>
</dbReference>
<dbReference type="SMR" id="A9L2Q9"/>
<dbReference type="GeneID" id="11772457"/>
<dbReference type="KEGG" id="sbn:Sbal195_2330"/>
<dbReference type="HOGENOM" id="CLU_008554_0_1_6"/>
<dbReference type="Proteomes" id="UP000000770">
    <property type="component" value="Chromosome"/>
</dbReference>
<dbReference type="GO" id="GO:0005829">
    <property type="term" value="C:cytosol"/>
    <property type="evidence" value="ECO:0007669"/>
    <property type="project" value="TreeGrafter"/>
</dbReference>
<dbReference type="GO" id="GO:0005524">
    <property type="term" value="F:ATP binding"/>
    <property type="evidence" value="ECO:0007669"/>
    <property type="project" value="UniProtKB-UniRule"/>
</dbReference>
<dbReference type="GO" id="GO:0046872">
    <property type="term" value="F:metal ion binding"/>
    <property type="evidence" value="ECO:0007669"/>
    <property type="project" value="UniProtKB-KW"/>
</dbReference>
<dbReference type="GO" id="GO:0004829">
    <property type="term" value="F:threonine-tRNA ligase activity"/>
    <property type="evidence" value="ECO:0007669"/>
    <property type="project" value="UniProtKB-UniRule"/>
</dbReference>
<dbReference type="GO" id="GO:0000049">
    <property type="term" value="F:tRNA binding"/>
    <property type="evidence" value="ECO:0007669"/>
    <property type="project" value="UniProtKB-KW"/>
</dbReference>
<dbReference type="GO" id="GO:0006435">
    <property type="term" value="P:threonyl-tRNA aminoacylation"/>
    <property type="evidence" value="ECO:0007669"/>
    <property type="project" value="UniProtKB-UniRule"/>
</dbReference>
<dbReference type="CDD" id="cd01667">
    <property type="entry name" value="TGS_ThrRS"/>
    <property type="match status" value="1"/>
</dbReference>
<dbReference type="CDD" id="cd00860">
    <property type="entry name" value="ThrRS_anticodon"/>
    <property type="match status" value="1"/>
</dbReference>
<dbReference type="CDD" id="cd00771">
    <property type="entry name" value="ThrRS_core"/>
    <property type="match status" value="1"/>
</dbReference>
<dbReference type="FunFam" id="3.10.20.30:FF:000005">
    <property type="entry name" value="Threonine--tRNA ligase"/>
    <property type="match status" value="1"/>
</dbReference>
<dbReference type="FunFam" id="3.30.54.20:FF:000002">
    <property type="entry name" value="Threonine--tRNA ligase"/>
    <property type="match status" value="1"/>
</dbReference>
<dbReference type="FunFam" id="3.30.930.10:FF:000002">
    <property type="entry name" value="Threonine--tRNA ligase"/>
    <property type="match status" value="1"/>
</dbReference>
<dbReference type="FunFam" id="3.40.50.800:FF:000001">
    <property type="entry name" value="Threonine--tRNA ligase"/>
    <property type="match status" value="1"/>
</dbReference>
<dbReference type="FunFam" id="3.30.980.10:FF:000005">
    <property type="entry name" value="Threonyl-tRNA synthetase, mitochondrial"/>
    <property type="match status" value="1"/>
</dbReference>
<dbReference type="Gene3D" id="3.10.20.30">
    <property type="match status" value="1"/>
</dbReference>
<dbReference type="Gene3D" id="3.30.54.20">
    <property type="match status" value="1"/>
</dbReference>
<dbReference type="Gene3D" id="3.40.50.800">
    <property type="entry name" value="Anticodon-binding domain"/>
    <property type="match status" value="1"/>
</dbReference>
<dbReference type="Gene3D" id="3.30.930.10">
    <property type="entry name" value="Bira Bifunctional Protein, Domain 2"/>
    <property type="match status" value="1"/>
</dbReference>
<dbReference type="Gene3D" id="3.30.980.10">
    <property type="entry name" value="Threonyl-trna Synthetase, Chain A, domain 2"/>
    <property type="match status" value="1"/>
</dbReference>
<dbReference type="HAMAP" id="MF_00184">
    <property type="entry name" value="Thr_tRNA_synth"/>
    <property type="match status" value="1"/>
</dbReference>
<dbReference type="InterPro" id="IPR002314">
    <property type="entry name" value="aa-tRNA-synt_IIb"/>
</dbReference>
<dbReference type="InterPro" id="IPR006195">
    <property type="entry name" value="aa-tRNA-synth_II"/>
</dbReference>
<dbReference type="InterPro" id="IPR045864">
    <property type="entry name" value="aa-tRNA-synth_II/BPL/LPL"/>
</dbReference>
<dbReference type="InterPro" id="IPR004154">
    <property type="entry name" value="Anticodon-bd"/>
</dbReference>
<dbReference type="InterPro" id="IPR036621">
    <property type="entry name" value="Anticodon-bd_dom_sf"/>
</dbReference>
<dbReference type="InterPro" id="IPR012675">
    <property type="entry name" value="Beta-grasp_dom_sf"/>
</dbReference>
<dbReference type="InterPro" id="IPR004095">
    <property type="entry name" value="TGS"/>
</dbReference>
<dbReference type="InterPro" id="IPR012676">
    <property type="entry name" value="TGS-like"/>
</dbReference>
<dbReference type="InterPro" id="IPR002320">
    <property type="entry name" value="Thr-tRNA-ligase_IIa"/>
</dbReference>
<dbReference type="InterPro" id="IPR018163">
    <property type="entry name" value="Thr/Ala-tRNA-synth_IIc_edit"/>
</dbReference>
<dbReference type="InterPro" id="IPR047246">
    <property type="entry name" value="ThrRS_anticodon"/>
</dbReference>
<dbReference type="InterPro" id="IPR033728">
    <property type="entry name" value="ThrRS_core"/>
</dbReference>
<dbReference type="InterPro" id="IPR012947">
    <property type="entry name" value="tRNA_SAD"/>
</dbReference>
<dbReference type="NCBIfam" id="TIGR00418">
    <property type="entry name" value="thrS"/>
    <property type="match status" value="1"/>
</dbReference>
<dbReference type="PANTHER" id="PTHR11451:SF44">
    <property type="entry name" value="THREONINE--TRNA LIGASE, CHLOROPLASTIC_MITOCHONDRIAL 2"/>
    <property type="match status" value="1"/>
</dbReference>
<dbReference type="PANTHER" id="PTHR11451">
    <property type="entry name" value="THREONINE-TRNA LIGASE"/>
    <property type="match status" value="1"/>
</dbReference>
<dbReference type="Pfam" id="PF03129">
    <property type="entry name" value="HGTP_anticodon"/>
    <property type="match status" value="1"/>
</dbReference>
<dbReference type="Pfam" id="PF02824">
    <property type="entry name" value="TGS"/>
    <property type="match status" value="1"/>
</dbReference>
<dbReference type="Pfam" id="PF00587">
    <property type="entry name" value="tRNA-synt_2b"/>
    <property type="match status" value="1"/>
</dbReference>
<dbReference type="Pfam" id="PF07973">
    <property type="entry name" value="tRNA_SAD"/>
    <property type="match status" value="1"/>
</dbReference>
<dbReference type="PRINTS" id="PR01047">
    <property type="entry name" value="TRNASYNTHTHR"/>
</dbReference>
<dbReference type="SMART" id="SM00863">
    <property type="entry name" value="tRNA_SAD"/>
    <property type="match status" value="1"/>
</dbReference>
<dbReference type="SUPFAM" id="SSF52954">
    <property type="entry name" value="Class II aaRS ABD-related"/>
    <property type="match status" value="1"/>
</dbReference>
<dbReference type="SUPFAM" id="SSF55681">
    <property type="entry name" value="Class II aaRS and biotin synthetases"/>
    <property type="match status" value="1"/>
</dbReference>
<dbReference type="SUPFAM" id="SSF81271">
    <property type="entry name" value="TGS-like"/>
    <property type="match status" value="1"/>
</dbReference>
<dbReference type="SUPFAM" id="SSF55186">
    <property type="entry name" value="ThrRS/AlaRS common domain"/>
    <property type="match status" value="1"/>
</dbReference>
<dbReference type="PROSITE" id="PS50862">
    <property type="entry name" value="AA_TRNA_LIGASE_II"/>
    <property type="match status" value="1"/>
</dbReference>
<dbReference type="PROSITE" id="PS51880">
    <property type="entry name" value="TGS"/>
    <property type="match status" value="1"/>
</dbReference>
<protein>
    <recommendedName>
        <fullName evidence="1">Threonine--tRNA ligase</fullName>
        <ecNumber evidence="1">6.1.1.3</ecNumber>
    </recommendedName>
    <alternativeName>
        <fullName evidence="1">Threonyl-tRNA synthetase</fullName>
        <shortName evidence="1">ThrRS</shortName>
    </alternativeName>
</protein>
<name>SYT_SHEB9</name>
<proteinExistence type="inferred from homology"/>
<comment type="function">
    <text evidence="1">Catalyzes the attachment of threonine to tRNA(Thr) in a two-step reaction: L-threonine is first activated by ATP to form Thr-AMP and then transferred to the acceptor end of tRNA(Thr). Also edits incorrectly charged L-seryl-tRNA(Thr).</text>
</comment>
<comment type="catalytic activity">
    <reaction evidence="1">
        <text>tRNA(Thr) + L-threonine + ATP = L-threonyl-tRNA(Thr) + AMP + diphosphate + H(+)</text>
        <dbReference type="Rhea" id="RHEA:24624"/>
        <dbReference type="Rhea" id="RHEA-COMP:9670"/>
        <dbReference type="Rhea" id="RHEA-COMP:9704"/>
        <dbReference type="ChEBI" id="CHEBI:15378"/>
        <dbReference type="ChEBI" id="CHEBI:30616"/>
        <dbReference type="ChEBI" id="CHEBI:33019"/>
        <dbReference type="ChEBI" id="CHEBI:57926"/>
        <dbReference type="ChEBI" id="CHEBI:78442"/>
        <dbReference type="ChEBI" id="CHEBI:78534"/>
        <dbReference type="ChEBI" id="CHEBI:456215"/>
        <dbReference type="EC" id="6.1.1.3"/>
    </reaction>
</comment>
<comment type="cofactor">
    <cofactor evidence="1">
        <name>Zn(2+)</name>
        <dbReference type="ChEBI" id="CHEBI:29105"/>
    </cofactor>
    <text evidence="1">Binds 1 zinc ion per subunit.</text>
</comment>
<comment type="subunit">
    <text evidence="1">Homodimer.</text>
</comment>
<comment type="subcellular location">
    <subcellularLocation>
        <location evidence="1">Cytoplasm</location>
    </subcellularLocation>
</comment>
<comment type="similarity">
    <text evidence="1">Belongs to the class-II aminoacyl-tRNA synthetase family.</text>
</comment>
<reference key="1">
    <citation type="submission" date="2007-11" db="EMBL/GenBank/DDBJ databases">
        <title>Complete sequence of chromosome of Shewanella baltica OS195.</title>
        <authorList>
            <consortium name="US DOE Joint Genome Institute"/>
            <person name="Copeland A."/>
            <person name="Lucas S."/>
            <person name="Lapidus A."/>
            <person name="Barry K."/>
            <person name="Glavina del Rio T."/>
            <person name="Dalin E."/>
            <person name="Tice H."/>
            <person name="Pitluck S."/>
            <person name="Chain P."/>
            <person name="Malfatti S."/>
            <person name="Shin M."/>
            <person name="Vergez L."/>
            <person name="Schmutz J."/>
            <person name="Larimer F."/>
            <person name="Land M."/>
            <person name="Hauser L."/>
            <person name="Kyrpides N."/>
            <person name="Kim E."/>
            <person name="Brettar I."/>
            <person name="Rodrigues J."/>
            <person name="Konstantinidis K."/>
            <person name="Klappenbach J."/>
            <person name="Hofle M."/>
            <person name="Tiedje J."/>
            <person name="Richardson P."/>
        </authorList>
    </citation>
    <scope>NUCLEOTIDE SEQUENCE [LARGE SCALE GENOMIC DNA]</scope>
    <source>
        <strain>OS195</strain>
    </source>
</reference>
<accession>A9L2Q9</accession>
<keyword id="KW-0030">Aminoacyl-tRNA synthetase</keyword>
<keyword id="KW-0067">ATP-binding</keyword>
<keyword id="KW-0963">Cytoplasm</keyword>
<keyword id="KW-0436">Ligase</keyword>
<keyword id="KW-0479">Metal-binding</keyword>
<keyword id="KW-0547">Nucleotide-binding</keyword>
<keyword id="KW-0648">Protein biosynthesis</keyword>
<keyword id="KW-0694">RNA-binding</keyword>
<keyword id="KW-0820">tRNA-binding</keyword>
<keyword id="KW-0862">Zinc</keyword>
<gene>
    <name evidence="1" type="primary">thrS</name>
    <name type="ordered locus">Sbal195_2330</name>
</gene>
<feature type="chain" id="PRO_1000077372" description="Threonine--tRNA ligase">
    <location>
        <begin position="1"/>
        <end position="642"/>
    </location>
</feature>
<feature type="domain" description="TGS" evidence="2">
    <location>
        <begin position="1"/>
        <end position="61"/>
    </location>
</feature>
<feature type="region of interest" description="Catalytic" evidence="1">
    <location>
        <begin position="243"/>
        <end position="534"/>
    </location>
</feature>
<feature type="binding site" evidence="1">
    <location>
        <position position="334"/>
    </location>
    <ligand>
        <name>Zn(2+)</name>
        <dbReference type="ChEBI" id="CHEBI:29105"/>
    </ligand>
</feature>
<feature type="binding site" evidence="1">
    <location>
        <position position="385"/>
    </location>
    <ligand>
        <name>Zn(2+)</name>
        <dbReference type="ChEBI" id="CHEBI:29105"/>
    </ligand>
</feature>
<feature type="binding site" evidence="1">
    <location>
        <position position="511"/>
    </location>
    <ligand>
        <name>Zn(2+)</name>
        <dbReference type="ChEBI" id="CHEBI:29105"/>
    </ligand>
</feature>
<sequence>MPVITLPDGSKREFAHAVSTLDVAADIGPGLAKACIAGRVNGELKDACDLIETDAELSIITAKDEEGVEILRHSCAHLLGHAIKQMWPETKMAIGPVIDNGFYYDIDLEHKLTQDDIDALEKRMLQLAKTNYDVVKRVVSWQEARDAFAARGEDYKIAILDENISKDATPALYHHEEYTDMCRGPHVPNMRFCQHFKLMSIAGAYWRGNSENKMLQRIYGTAWADKKALSTHLTRLEEAAKRDHRKIGKQLDLYHMQEEAPGMVFWHNDGWSIFLELERFIRRKLNQYTYQEVKGPLMMDRVLWERSGHWDKYSEAMFTTSSENREYAIKPMNCPGHVQIFNQGLKSYRDLPLRMAEFGCCHRNEPSGSLHGLMRVRGFTQDDAHIFCTDSQVQEEVSACIQMVYDTYATFGFENIVVKLSTRPEKRIGDDAMWDRAEEALKQALRDNNIEFTILPGEGAFYGPKIEFTLHDCLDRAWQCGTVQLDYALPSRLGATYVAEDNSRQTPVMIHRAILGSLERFLGILIEEYAGRFPTWLAPMQVVVMNITDKQADYVEEVVKFFKEQGIRASFDLRNEKIGFKIREHTLRRVPYLLVVGDQEMENKEVAVRTRDGIDLGKMRLEDFATKIHQQISLRSLKLLEE</sequence>
<organism>
    <name type="scientific">Shewanella baltica (strain OS195)</name>
    <dbReference type="NCBI Taxonomy" id="399599"/>
    <lineage>
        <taxon>Bacteria</taxon>
        <taxon>Pseudomonadati</taxon>
        <taxon>Pseudomonadota</taxon>
        <taxon>Gammaproteobacteria</taxon>
        <taxon>Alteromonadales</taxon>
        <taxon>Shewanellaceae</taxon>
        <taxon>Shewanella</taxon>
    </lineage>
</organism>
<evidence type="ECO:0000255" key="1">
    <source>
        <dbReference type="HAMAP-Rule" id="MF_00184"/>
    </source>
</evidence>
<evidence type="ECO:0000255" key="2">
    <source>
        <dbReference type="PROSITE-ProRule" id="PRU01228"/>
    </source>
</evidence>